<proteinExistence type="evidence at protein level"/>
<reference key="1">
    <citation type="journal article" date="2002" name="Proc. Natl. Acad. Sci. U.S.A.">
        <title>A mammalian homolog of unc-53 is regulated by all-trans retinoic acid in neuroblastoma cells and embryos.</title>
        <authorList>
            <person name="Merrill R.A."/>
            <person name="Plum L.A."/>
            <person name="Kaiser M.E."/>
            <person name="Clagett-Dame M."/>
        </authorList>
    </citation>
    <scope>NUCLEOTIDE SEQUENCE [MRNA] (ISOFORMS 2 AND 3)</scope>
    <scope>INDUCTION BY ATRA</scope>
    <scope>TISSUE SPECIFICITY</scope>
    <scope>DEVELOPMENTAL STAGE</scope>
    <scope>VARIANT ALA-1077</scope>
</reference>
<reference key="2">
    <citation type="journal article" date="2002" name="Oncogene">
        <title>Isolation of HELAD1, a novel human helicase gene up-regulated in colorectal carcinomas.</title>
        <authorList>
            <person name="Ishiguro H."/>
            <person name="Shimokawa T."/>
            <person name="Tsunoda T."/>
            <person name="Tanaka T."/>
            <person name="Fujii Y."/>
            <person name="Nakamura Y."/>
            <person name="Furukawa Y."/>
        </authorList>
    </citation>
    <scope>NUCLEOTIDE SEQUENCE [MRNA] (ISOFORMS 3 AND 4)</scope>
    <scope>SUBCELLULAR LOCATION</scope>
    <scope>FUNCTION AS A HELICASE</scope>
    <scope>INDUCTION</scope>
    <scope>TISSUE SPECIFICITY</scope>
    <scope>VARIANTS LYS-109 AND ALA-1077</scope>
</reference>
<reference key="3">
    <citation type="journal article" date="2004" name="Brain Res. Dev. Brain Res.">
        <title>Sensory deficits in mice hypomorphic for a mammalian homologue of unc-53.</title>
        <authorList>
            <person name="Peeters P.J."/>
            <person name="Baker A."/>
            <person name="Goris I."/>
            <person name="Daneels G."/>
            <person name="Verhasselt P."/>
            <person name="Luyten W.H.M.L."/>
            <person name="Geysen J.J.G.H."/>
            <person name="Kass S.U."/>
            <person name="Moechars D.W.E."/>
        </authorList>
    </citation>
    <scope>NUCLEOTIDE SEQUENCE [MRNA] (ISOFORMS 1; 8; 9; 10; 11; 12 AND 13)</scope>
    <scope>FUNCTION</scope>
    <scope>VARIANTS LYS-109 AND ALA-1077</scope>
</reference>
<reference key="4">
    <citation type="journal article" date="2000" name="DNA Res.">
        <title>Prediction of the coding sequences of unidentified human genes. XVI. The complete sequences of 150 new cDNA clones from brain which code for large proteins in vitro.</title>
        <authorList>
            <person name="Nagase T."/>
            <person name="Kikuno R."/>
            <person name="Ishikawa K."/>
            <person name="Hirosawa M."/>
            <person name="Ohara O."/>
        </authorList>
    </citation>
    <scope>NUCLEOTIDE SEQUENCE [LARGE SCALE MRNA] (ISOFORM 2)</scope>
    <scope>VARIANT ALA-1077</scope>
    <source>
        <tissue>Brain</tissue>
    </source>
</reference>
<reference key="5">
    <citation type="journal article" date="2002" name="DNA Res.">
        <title>Construction of expression-ready cDNA clones for KIAA genes: manual curation of 330 KIAA cDNA clones.</title>
        <authorList>
            <person name="Nakajima D."/>
            <person name="Okazaki N."/>
            <person name="Yamakawa H."/>
            <person name="Kikuno R."/>
            <person name="Ohara O."/>
            <person name="Nagase T."/>
        </authorList>
    </citation>
    <scope>SEQUENCE REVISION</scope>
</reference>
<reference key="6">
    <citation type="submission" date="2005-01" db="EMBL/GenBank/DDBJ databases">
        <authorList>
            <person name="Ohara O."/>
        </authorList>
    </citation>
    <scope>SEQUENCE REVISION</scope>
</reference>
<reference key="7">
    <citation type="journal article" date="2004" name="Nat. Genet.">
        <title>Complete sequencing and characterization of 21,243 full-length human cDNAs.</title>
        <authorList>
            <person name="Ota T."/>
            <person name="Suzuki Y."/>
            <person name="Nishikawa T."/>
            <person name="Otsuki T."/>
            <person name="Sugiyama T."/>
            <person name="Irie R."/>
            <person name="Wakamatsu A."/>
            <person name="Hayashi K."/>
            <person name="Sato H."/>
            <person name="Nagai K."/>
            <person name="Kimura K."/>
            <person name="Makita H."/>
            <person name="Sekine M."/>
            <person name="Obayashi M."/>
            <person name="Nishi T."/>
            <person name="Shibahara T."/>
            <person name="Tanaka T."/>
            <person name="Ishii S."/>
            <person name="Yamamoto J."/>
            <person name="Saito K."/>
            <person name="Kawai Y."/>
            <person name="Isono Y."/>
            <person name="Nakamura Y."/>
            <person name="Nagahari K."/>
            <person name="Murakami K."/>
            <person name="Yasuda T."/>
            <person name="Iwayanagi T."/>
            <person name="Wagatsuma M."/>
            <person name="Shiratori A."/>
            <person name="Sudo H."/>
            <person name="Hosoiri T."/>
            <person name="Kaku Y."/>
            <person name="Kodaira H."/>
            <person name="Kondo H."/>
            <person name="Sugawara M."/>
            <person name="Takahashi M."/>
            <person name="Kanda K."/>
            <person name="Yokoi T."/>
            <person name="Furuya T."/>
            <person name="Kikkawa E."/>
            <person name="Omura Y."/>
            <person name="Abe K."/>
            <person name="Kamihara K."/>
            <person name="Katsuta N."/>
            <person name="Sato K."/>
            <person name="Tanikawa M."/>
            <person name="Yamazaki M."/>
            <person name="Ninomiya K."/>
            <person name="Ishibashi T."/>
            <person name="Yamashita H."/>
            <person name="Murakawa K."/>
            <person name="Fujimori K."/>
            <person name="Tanai H."/>
            <person name="Kimata M."/>
            <person name="Watanabe M."/>
            <person name="Hiraoka S."/>
            <person name="Chiba Y."/>
            <person name="Ishida S."/>
            <person name="Ono Y."/>
            <person name="Takiguchi S."/>
            <person name="Watanabe S."/>
            <person name="Yosida M."/>
            <person name="Hotuta T."/>
            <person name="Kusano J."/>
            <person name="Kanehori K."/>
            <person name="Takahashi-Fujii A."/>
            <person name="Hara H."/>
            <person name="Tanase T.-O."/>
            <person name="Nomura Y."/>
            <person name="Togiya S."/>
            <person name="Komai F."/>
            <person name="Hara R."/>
            <person name="Takeuchi K."/>
            <person name="Arita M."/>
            <person name="Imose N."/>
            <person name="Musashino K."/>
            <person name="Yuuki H."/>
            <person name="Oshima A."/>
            <person name="Sasaki N."/>
            <person name="Aotsuka S."/>
            <person name="Yoshikawa Y."/>
            <person name="Matsunawa H."/>
            <person name="Ichihara T."/>
            <person name="Shiohata N."/>
            <person name="Sano S."/>
            <person name="Moriya S."/>
            <person name="Momiyama H."/>
            <person name="Satoh N."/>
            <person name="Takami S."/>
            <person name="Terashima Y."/>
            <person name="Suzuki O."/>
            <person name="Nakagawa S."/>
            <person name="Senoh A."/>
            <person name="Mizoguchi H."/>
            <person name="Goto Y."/>
            <person name="Shimizu F."/>
            <person name="Wakebe H."/>
            <person name="Hishigaki H."/>
            <person name="Watanabe T."/>
            <person name="Sugiyama A."/>
            <person name="Takemoto M."/>
            <person name="Kawakami B."/>
            <person name="Yamazaki M."/>
            <person name="Watanabe K."/>
            <person name="Kumagai A."/>
            <person name="Itakura S."/>
            <person name="Fukuzumi Y."/>
            <person name="Fujimori Y."/>
            <person name="Komiyama M."/>
            <person name="Tashiro H."/>
            <person name="Tanigami A."/>
            <person name="Fujiwara T."/>
            <person name="Ono T."/>
            <person name="Yamada K."/>
            <person name="Fujii Y."/>
            <person name="Ozaki K."/>
            <person name="Hirao M."/>
            <person name="Ohmori Y."/>
            <person name="Kawabata A."/>
            <person name="Hikiji T."/>
            <person name="Kobatake N."/>
            <person name="Inagaki H."/>
            <person name="Ikema Y."/>
            <person name="Okamoto S."/>
            <person name="Okitani R."/>
            <person name="Kawakami T."/>
            <person name="Noguchi S."/>
            <person name="Itoh T."/>
            <person name="Shigeta K."/>
            <person name="Senba T."/>
            <person name="Matsumura K."/>
            <person name="Nakajima Y."/>
            <person name="Mizuno T."/>
            <person name="Morinaga M."/>
            <person name="Sasaki M."/>
            <person name="Togashi T."/>
            <person name="Oyama M."/>
            <person name="Hata H."/>
            <person name="Watanabe M."/>
            <person name="Komatsu T."/>
            <person name="Mizushima-Sugano J."/>
            <person name="Satoh T."/>
            <person name="Shirai Y."/>
            <person name="Takahashi Y."/>
            <person name="Nakagawa K."/>
            <person name="Okumura K."/>
            <person name="Nagase T."/>
            <person name="Nomura N."/>
            <person name="Kikuchi H."/>
            <person name="Masuho Y."/>
            <person name="Yamashita R."/>
            <person name="Nakai K."/>
            <person name="Yada T."/>
            <person name="Nakamura Y."/>
            <person name="Ohara O."/>
            <person name="Isogai T."/>
            <person name="Sugano S."/>
        </authorList>
    </citation>
    <scope>NUCLEOTIDE SEQUENCE [LARGE SCALE MRNA] (ISOFORMS 5; 6 AND 7)</scope>
    <scope>VARIANTS ASP-1041; ALA-1077 AND ILE-2374</scope>
    <source>
        <tissue>Placenta</tissue>
    </source>
</reference>
<reference key="8">
    <citation type="journal article" date="2006" name="Nature">
        <title>Human chromosome 11 DNA sequence and analysis including novel gene identification.</title>
        <authorList>
            <person name="Taylor T.D."/>
            <person name="Noguchi H."/>
            <person name="Totoki Y."/>
            <person name="Toyoda A."/>
            <person name="Kuroki Y."/>
            <person name="Dewar K."/>
            <person name="Lloyd C."/>
            <person name="Itoh T."/>
            <person name="Takeda T."/>
            <person name="Kim D.-W."/>
            <person name="She X."/>
            <person name="Barlow K.F."/>
            <person name="Bloom T."/>
            <person name="Bruford E."/>
            <person name="Chang J.L."/>
            <person name="Cuomo C.A."/>
            <person name="Eichler E."/>
            <person name="FitzGerald M.G."/>
            <person name="Jaffe D.B."/>
            <person name="LaButti K."/>
            <person name="Nicol R."/>
            <person name="Park H.-S."/>
            <person name="Seaman C."/>
            <person name="Sougnez C."/>
            <person name="Yang X."/>
            <person name="Zimmer A.R."/>
            <person name="Zody M.C."/>
            <person name="Birren B.W."/>
            <person name="Nusbaum C."/>
            <person name="Fujiyama A."/>
            <person name="Hattori M."/>
            <person name="Rogers J."/>
            <person name="Lander E.S."/>
            <person name="Sakaki Y."/>
        </authorList>
    </citation>
    <scope>NUCLEOTIDE SEQUENCE [LARGE SCALE GENOMIC DNA]</scope>
</reference>
<reference key="9">
    <citation type="journal article" date="2004" name="Genome Res.">
        <title>The status, quality, and expansion of the NIH full-length cDNA project: the Mammalian Gene Collection (MGC).</title>
        <authorList>
            <consortium name="The MGC Project Team"/>
        </authorList>
    </citation>
    <scope>NUCLEOTIDE SEQUENCE [LARGE SCALE MRNA] (ISOFORM 6)</scope>
    <scope>VARIANT ALA-1077</scope>
    <source>
        <tissue>Skin</tissue>
    </source>
</reference>
<reference key="10">
    <citation type="journal article" date="2002" name="Gene">
        <title>Pore membrane and/or filament interacting like protein 1 (POMFIL1) is predominantly expressed in the nervous system and encodes different protein isoforms.</title>
        <authorList>
            <person name="Coy J.F."/>
            <person name="Wiemann S."/>
            <person name="Bechmann I."/>
            <person name="Baechner D."/>
            <person name="Nitsch R."/>
            <person name="Kretz O."/>
            <person name="Christiansen H."/>
            <person name="Poustka A."/>
        </authorList>
    </citation>
    <scope>IDENTIFICATION</scope>
    <scope>TISSUE SPECIFICITY</scope>
</reference>
<reference key="11">
    <citation type="journal article" date="2002" name="Genomics">
        <title>Neuron navigator: a human gene family with homology to unc-53, a cell guidance gene from Caenorhabditis elegans.</title>
        <authorList>
            <person name="Maes T."/>
            <person name="Barcelo A."/>
            <person name="Buesa C."/>
        </authorList>
    </citation>
    <scope>ALTERNATIVE SPLICING</scope>
    <scope>TISSUE SPECIFICITY</scope>
</reference>
<reference key="12">
    <citation type="journal article" date="2006" name="Nat. Biotechnol.">
        <title>A probability-based approach for high-throughput protein phosphorylation analysis and site localization.</title>
        <authorList>
            <person name="Beausoleil S.A."/>
            <person name="Villen J."/>
            <person name="Gerber S.A."/>
            <person name="Rush J."/>
            <person name="Gygi S.P."/>
        </authorList>
    </citation>
    <scope>PHOSPHORYLATION [LARGE SCALE ANALYSIS] AT SER-1977</scope>
    <scope>IDENTIFICATION BY MASS SPECTROMETRY [LARGE SCALE ANALYSIS]</scope>
    <source>
        <tissue>Cervix carcinoma</tissue>
    </source>
</reference>
<reference key="13">
    <citation type="journal article" date="2008" name="Proc. Natl. Acad. Sci. U.S.A.">
        <title>A quantitative atlas of mitotic phosphorylation.</title>
        <authorList>
            <person name="Dephoure N."/>
            <person name="Zhou C."/>
            <person name="Villen J."/>
            <person name="Beausoleil S.A."/>
            <person name="Bakalarski C.E."/>
            <person name="Elledge S.J."/>
            <person name="Gygi S.P."/>
        </authorList>
    </citation>
    <scope>PHOSPHORYLATION [LARGE SCALE ANALYSIS] AT SER-1480; SER-1484; SER-1488 AND SER-1977</scope>
    <scope>IDENTIFICATION BY MASS SPECTROMETRY [LARGE SCALE ANALYSIS]</scope>
    <source>
        <tissue>Cervix carcinoma</tissue>
    </source>
</reference>
<reference key="14">
    <citation type="journal article" date="2011" name="Sci. Signal.">
        <title>System-wide temporal characterization of the proteome and phosphoproteome of human embryonic stem cell differentiation.</title>
        <authorList>
            <person name="Rigbolt K.T."/>
            <person name="Prokhorova T.A."/>
            <person name="Akimov V."/>
            <person name="Henningsen J."/>
            <person name="Johansen P.T."/>
            <person name="Kratchmarova I."/>
            <person name="Kassem M."/>
            <person name="Mann M."/>
            <person name="Olsen J.V."/>
            <person name="Blagoev B."/>
        </authorList>
    </citation>
    <scope>IDENTIFICATION BY MASS SPECTROMETRY [LARGE SCALE ANALYSIS]</scope>
</reference>
<reference key="15">
    <citation type="journal article" date="2013" name="J. Proteome Res.">
        <title>Toward a comprehensive characterization of a human cancer cell phosphoproteome.</title>
        <authorList>
            <person name="Zhou H."/>
            <person name="Di Palma S."/>
            <person name="Preisinger C."/>
            <person name="Peng M."/>
            <person name="Polat A.N."/>
            <person name="Heck A.J."/>
            <person name="Mohammed S."/>
        </authorList>
    </citation>
    <scope>IDENTIFICATION BY MASS SPECTROMETRY [LARGE SCALE ANALYSIS]</scope>
    <source>
        <tissue>Cervix carcinoma</tissue>
    </source>
</reference>
<reference key="16">
    <citation type="journal article" date="2014" name="J. Proteomics">
        <title>An enzyme assisted RP-RPLC approach for in-depth analysis of human liver phosphoproteome.</title>
        <authorList>
            <person name="Bian Y."/>
            <person name="Song C."/>
            <person name="Cheng K."/>
            <person name="Dong M."/>
            <person name="Wang F."/>
            <person name="Huang J."/>
            <person name="Sun D."/>
            <person name="Wang L."/>
            <person name="Ye M."/>
            <person name="Zou H."/>
        </authorList>
    </citation>
    <scope>IDENTIFICATION BY MASS SPECTROMETRY [LARGE SCALE ANALYSIS]</scope>
    <source>
        <tissue>Liver</tissue>
    </source>
</reference>
<reference key="17">
    <citation type="submission" date="2009-02" db="PDB data bank">
        <title>Solution structure of the CH domain from human neuron navigator 2.</title>
        <authorList>
            <consortium name="RIKEN structural genomics initiative (RSGI)"/>
        </authorList>
    </citation>
    <scope>STRUCTURE BY NMR OF 90-197</scope>
</reference>
<dbReference type="EC" id="3.6.4.12"/>
<dbReference type="EMBL" id="AF466143">
    <property type="protein sequence ID" value="AAL96479.1"/>
    <property type="molecule type" value="mRNA"/>
</dbReference>
<dbReference type="EMBL" id="AF466144">
    <property type="protein sequence ID" value="AAL96480.1"/>
    <property type="molecule type" value="mRNA"/>
</dbReference>
<dbReference type="EMBL" id="AB063115">
    <property type="protein sequence ID" value="BAC00853.1"/>
    <property type="molecule type" value="mRNA"/>
</dbReference>
<dbReference type="EMBL" id="AB063116">
    <property type="protein sequence ID" value="BAC00854.1"/>
    <property type="molecule type" value="mRNA"/>
</dbReference>
<dbReference type="EMBL" id="AJ488102">
    <property type="protein sequence ID" value="CAD32471.1"/>
    <property type="molecule type" value="mRNA"/>
</dbReference>
<dbReference type="EMBL" id="AJ488203">
    <property type="protein sequence ID" value="CAD32556.1"/>
    <property type="molecule type" value="mRNA"/>
</dbReference>
<dbReference type="EMBL" id="AJ488204">
    <property type="protein sequence ID" value="CAD32557.1"/>
    <property type="molecule type" value="mRNA"/>
</dbReference>
<dbReference type="EMBL" id="AJ488205">
    <property type="protein sequence ID" value="CAD32558.1"/>
    <property type="molecule type" value="mRNA"/>
</dbReference>
<dbReference type="EMBL" id="AJ488206">
    <property type="protein sequence ID" value="CAD32559.1"/>
    <property type="molecule type" value="mRNA"/>
</dbReference>
<dbReference type="EMBL" id="AJ488207">
    <property type="protein sequence ID" value="CAD32560.1"/>
    <property type="molecule type" value="mRNA"/>
</dbReference>
<dbReference type="EMBL" id="AJ488208">
    <property type="protein sequence ID" value="CAD32561.1"/>
    <property type="molecule type" value="mRNA"/>
</dbReference>
<dbReference type="EMBL" id="AB037840">
    <property type="protein sequence ID" value="BAA92657.3"/>
    <property type="status" value="ALT_INIT"/>
    <property type="molecule type" value="mRNA"/>
</dbReference>
<dbReference type="EMBL" id="AK001495">
    <property type="protein sequence ID" value="BAA91723.1"/>
    <property type="molecule type" value="mRNA"/>
</dbReference>
<dbReference type="EMBL" id="AK001892">
    <property type="protein sequence ID" value="BAA91965.1"/>
    <property type="molecule type" value="mRNA"/>
</dbReference>
<dbReference type="EMBL" id="AK074287">
    <property type="protein sequence ID" value="BAB85038.1"/>
    <property type="status" value="ALT_FRAME"/>
    <property type="molecule type" value="mRNA"/>
</dbReference>
<dbReference type="EMBL" id="AC009549">
    <property type="status" value="NOT_ANNOTATED_CDS"/>
    <property type="molecule type" value="Genomic_DNA"/>
</dbReference>
<dbReference type="EMBL" id="AC015684">
    <property type="status" value="NOT_ANNOTATED_CDS"/>
    <property type="molecule type" value="Genomic_DNA"/>
</dbReference>
<dbReference type="EMBL" id="AC023950">
    <property type="status" value="NOT_ANNOTATED_CDS"/>
    <property type="molecule type" value="Genomic_DNA"/>
</dbReference>
<dbReference type="EMBL" id="AC090662">
    <property type="status" value="NOT_ANNOTATED_CDS"/>
    <property type="molecule type" value="Genomic_DNA"/>
</dbReference>
<dbReference type="EMBL" id="AC111163">
    <property type="status" value="NOT_ANNOTATED_CDS"/>
    <property type="molecule type" value="Genomic_DNA"/>
</dbReference>
<dbReference type="EMBL" id="AC113193">
    <property type="status" value="NOT_ANNOTATED_CDS"/>
    <property type="molecule type" value="Genomic_DNA"/>
</dbReference>
<dbReference type="EMBL" id="BC016054">
    <property type="protein sequence ID" value="AAH16054.1"/>
    <property type="molecule type" value="mRNA"/>
</dbReference>
<dbReference type="CCDS" id="CCDS44552.1">
    <molecule id="Q8IVL1-5"/>
</dbReference>
<dbReference type="CCDS" id="CCDS53612.1">
    <molecule id="Q8IVL1-4"/>
</dbReference>
<dbReference type="CCDS" id="CCDS58126.1">
    <molecule id="Q8IVL1-1"/>
</dbReference>
<dbReference type="CCDS" id="CCDS7850.1">
    <molecule id="Q8IVL1-3"/>
</dbReference>
<dbReference type="CCDS" id="CCDS7851.2">
    <molecule id="Q8IVL1-2"/>
</dbReference>
<dbReference type="RefSeq" id="NP_001104488.1">
    <molecule id="Q8IVL1-4"/>
    <property type="nucleotide sequence ID" value="NM_001111018.2"/>
</dbReference>
<dbReference type="RefSeq" id="NP_001104489.1">
    <molecule id="Q8IVL1-5"/>
    <property type="nucleotide sequence ID" value="NM_001111019.3"/>
</dbReference>
<dbReference type="RefSeq" id="NP_001231892.1">
    <molecule id="Q8IVL1-1"/>
    <property type="nucleotide sequence ID" value="NM_001244963.2"/>
</dbReference>
<dbReference type="RefSeq" id="NP_660093.2">
    <molecule id="Q8IVL1-3"/>
    <property type="nucleotide sequence ID" value="NM_145117.4"/>
</dbReference>
<dbReference type="RefSeq" id="NP_892009.3">
    <molecule id="Q8IVL1-2"/>
    <property type="nucleotide sequence ID" value="NM_182964.5"/>
</dbReference>
<dbReference type="RefSeq" id="XP_006718431.1">
    <property type="nucleotide sequence ID" value="XM_006718368.3"/>
</dbReference>
<dbReference type="RefSeq" id="XP_011518754.1">
    <property type="nucleotide sequence ID" value="XM_011520452.2"/>
</dbReference>
<dbReference type="PDB" id="2YRN">
    <property type="method" value="NMR"/>
    <property type="chains" value="A=90-197"/>
</dbReference>
<dbReference type="PDBsum" id="2YRN"/>
<dbReference type="SMR" id="Q8IVL1"/>
<dbReference type="BioGRID" id="124606">
    <property type="interactions" value="44"/>
</dbReference>
<dbReference type="FunCoup" id="Q8IVL1">
    <property type="interactions" value="1356"/>
</dbReference>
<dbReference type="IntAct" id="Q8IVL1">
    <property type="interactions" value="23"/>
</dbReference>
<dbReference type="MINT" id="Q8IVL1"/>
<dbReference type="STRING" id="9606.ENSP00000379396"/>
<dbReference type="CarbonylDB" id="Q8IVL1"/>
<dbReference type="GlyConnect" id="1961">
    <property type="glycosylation" value="13 N-Linked glycans (7 sites)"/>
</dbReference>
<dbReference type="GlyCosmos" id="Q8IVL1">
    <property type="glycosylation" value="8 sites, 16 glycans"/>
</dbReference>
<dbReference type="GlyGen" id="Q8IVL1">
    <property type="glycosylation" value="12 sites, 17 N-linked glycans (8 sites), 1 O-linked glycan (3 sites)"/>
</dbReference>
<dbReference type="iPTMnet" id="Q8IVL1"/>
<dbReference type="PhosphoSitePlus" id="Q8IVL1"/>
<dbReference type="SwissPalm" id="Q8IVL1"/>
<dbReference type="BioMuta" id="NAV2"/>
<dbReference type="DMDM" id="308153582"/>
<dbReference type="jPOST" id="Q8IVL1"/>
<dbReference type="MassIVE" id="Q8IVL1"/>
<dbReference type="PaxDb" id="9606-ENSP00000379396"/>
<dbReference type="PeptideAtlas" id="Q8IVL1"/>
<dbReference type="ProteomicsDB" id="70724">
    <molecule id="Q8IVL1-1"/>
</dbReference>
<dbReference type="ProteomicsDB" id="70725">
    <molecule id="Q8IVL1-10"/>
</dbReference>
<dbReference type="ProteomicsDB" id="70726">
    <molecule id="Q8IVL1-11"/>
</dbReference>
<dbReference type="ProteomicsDB" id="70727">
    <molecule id="Q8IVL1-12"/>
</dbReference>
<dbReference type="ProteomicsDB" id="70728">
    <molecule id="Q8IVL1-13"/>
</dbReference>
<dbReference type="ProteomicsDB" id="70729">
    <molecule id="Q8IVL1-2"/>
</dbReference>
<dbReference type="ProteomicsDB" id="70730">
    <molecule id="Q8IVL1-3"/>
</dbReference>
<dbReference type="ProteomicsDB" id="70731">
    <molecule id="Q8IVL1-4"/>
</dbReference>
<dbReference type="ProteomicsDB" id="70732">
    <molecule id="Q8IVL1-5"/>
</dbReference>
<dbReference type="ProteomicsDB" id="70733">
    <molecule id="Q8IVL1-6"/>
</dbReference>
<dbReference type="ProteomicsDB" id="70734">
    <molecule id="Q8IVL1-7"/>
</dbReference>
<dbReference type="ProteomicsDB" id="70735">
    <molecule id="Q8IVL1-8"/>
</dbReference>
<dbReference type="ProteomicsDB" id="70736">
    <molecule id="Q8IVL1-9"/>
</dbReference>
<dbReference type="Antibodypedia" id="2148">
    <property type="antibodies" value="103 antibodies from 26 providers"/>
</dbReference>
<dbReference type="DNASU" id="89797"/>
<dbReference type="Ensembl" id="ENST00000349880.9">
    <molecule id="Q8IVL1-3"/>
    <property type="protein sequence ID" value="ENSP00000309577.6"/>
    <property type="gene ID" value="ENSG00000166833.23"/>
</dbReference>
<dbReference type="Ensembl" id="ENST00000360655.8">
    <molecule id="Q8IVL1-4"/>
    <property type="protein sequence ID" value="ENSP00000353871.4"/>
    <property type="gene ID" value="ENSG00000166833.23"/>
</dbReference>
<dbReference type="Ensembl" id="ENST00000396085.6">
    <molecule id="Q8IVL1-2"/>
    <property type="protein sequence ID" value="ENSP00000379394.1"/>
    <property type="gene ID" value="ENSG00000166833.23"/>
</dbReference>
<dbReference type="Ensembl" id="ENST00000396087.7">
    <molecule id="Q8IVL1-1"/>
    <property type="protein sequence ID" value="ENSP00000379396.3"/>
    <property type="gene ID" value="ENSG00000166833.23"/>
</dbReference>
<dbReference type="Ensembl" id="ENST00000533917.5">
    <molecule id="Q8IVL1-5"/>
    <property type="protein sequence ID" value="ENSP00000437316.1"/>
    <property type="gene ID" value="ENSG00000166833.23"/>
</dbReference>
<dbReference type="GeneID" id="89797"/>
<dbReference type="KEGG" id="hsa:89797"/>
<dbReference type="MANE-Select" id="ENST00000349880.9">
    <molecule id="Q8IVL1-3"/>
    <property type="protein sequence ID" value="ENSP00000309577.6"/>
    <property type="RefSeq nucleotide sequence ID" value="NM_145117.5"/>
    <property type="RefSeq protein sequence ID" value="NP_660093.2"/>
</dbReference>
<dbReference type="UCSC" id="uc001mpp.4">
    <molecule id="Q8IVL1-1"/>
    <property type="organism name" value="human"/>
</dbReference>
<dbReference type="AGR" id="HGNC:15997"/>
<dbReference type="CTD" id="89797"/>
<dbReference type="DisGeNET" id="89797"/>
<dbReference type="GeneCards" id="NAV2"/>
<dbReference type="HGNC" id="HGNC:15997">
    <property type="gene designation" value="NAV2"/>
</dbReference>
<dbReference type="HPA" id="ENSG00000166833">
    <property type="expression patterns" value="Tissue enhanced (heart)"/>
</dbReference>
<dbReference type="MalaCards" id="NAV2"/>
<dbReference type="MIM" id="607026">
    <property type="type" value="gene"/>
</dbReference>
<dbReference type="neXtProt" id="NX_Q8IVL1"/>
<dbReference type="OpenTargets" id="ENSG00000166833"/>
<dbReference type="PharmGKB" id="PA31452"/>
<dbReference type="VEuPathDB" id="HostDB:ENSG00000166833"/>
<dbReference type="eggNOG" id="ENOG502QPT3">
    <property type="taxonomic scope" value="Eukaryota"/>
</dbReference>
<dbReference type="GeneTree" id="ENSGT00940000155663"/>
<dbReference type="HOGENOM" id="CLU_001002_1_1_1"/>
<dbReference type="InParanoid" id="Q8IVL1"/>
<dbReference type="OMA" id="LPRKQDX"/>
<dbReference type="OrthoDB" id="2161974at2759"/>
<dbReference type="PAN-GO" id="Q8IVL1">
    <property type="GO annotations" value="1 GO annotation based on evolutionary models"/>
</dbReference>
<dbReference type="PhylomeDB" id="Q8IVL1"/>
<dbReference type="TreeFam" id="TF329881"/>
<dbReference type="PathwayCommons" id="Q8IVL1"/>
<dbReference type="SignaLink" id="Q8IVL1"/>
<dbReference type="SIGNOR" id="Q8IVL1"/>
<dbReference type="BioGRID-ORCS" id="89797">
    <property type="hits" value="11 hits in 1158 CRISPR screens"/>
</dbReference>
<dbReference type="ChiTaRS" id="NAV2">
    <property type="organism name" value="human"/>
</dbReference>
<dbReference type="EvolutionaryTrace" id="Q8IVL1"/>
<dbReference type="GeneWiki" id="NAV2"/>
<dbReference type="GenomeRNAi" id="89797"/>
<dbReference type="Pharos" id="Q8IVL1">
    <property type="development level" value="Tbio"/>
</dbReference>
<dbReference type="PRO" id="PR:Q8IVL1"/>
<dbReference type="Proteomes" id="UP000005640">
    <property type="component" value="Chromosome 11"/>
</dbReference>
<dbReference type="RNAct" id="Q8IVL1">
    <property type="molecule type" value="protein"/>
</dbReference>
<dbReference type="Bgee" id="ENSG00000166833">
    <property type="expression patterns" value="Expressed in blood vessel layer and 201 other cell types or tissues"/>
</dbReference>
<dbReference type="ExpressionAtlas" id="Q8IVL1">
    <property type="expression patterns" value="baseline and differential"/>
</dbReference>
<dbReference type="GO" id="GO:0005614">
    <property type="term" value="C:interstitial matrix"/>
    <property type="evidence" value="ECO:0007669"/>
    <property type="project" value="Ensembl"/>
</dbReference>
<dbReference type="GO" id="GO:0005654">
    <property type="term" value="C:nucleoplasm"/>
    <property type="evidence" value="ECO:0000314"/>
    <property type="project" value="HPA"/>
</dbReference>
<dbReference type="GO" id="GO:0043138">
    <property type="term" value="F:3'-5' DNA helicase activity"/>
    <property type="evidence" value="ECO:0000314"/>
    <property type="project" value="FlyBase"/>
</dbReference>
<dbReference type="GO" id="GO:0005524">
    <property type="term" value="F:ATP binding"/>
    <property type="evidence" value="ECO:0007669"/>
    <property type="project" value="UniProtKB-KW"/>
</dbReference>
<dbReference type="GO" id="GO:0016887">
    <property type="term" value="F:ATP hydrolysis activity"/>
    <property type="evidence" value="ECO:0007669"/>
    <property type="project" value="InterPro"/>
</dbReference>
<dbReference type="GO" id="GO:0008201">
    <property type="term" value="F:heparin binding"/>
    <property type="evidence" value="ECO:0007669"/>
    <property type="project" value="Ensembl"/>
</dbReference>
<dbReference type="GO" id="GO:0021695">
    <property type="term" value="P:cerebellar cortex development"/>
    <property type="evidence" value="ECO:0007669"/>
    <property type="project" value="Ensembl"/>
</dbReference>
<dbReference type="GO" id="GO:0021563">
    <property type="term" value="P:glossopharyngeal nerve development"/>
    <property type="evidence" value="ECO:0007669"/>
    <property type="project" value="Ensembl"/>
</dbReference>
<dbReference type="GO" id="GO:0007626">
    <property type="term" value="P:locomotory behavior"/>
    <property type="evidence" value="ECO:0007669"/>
    <property type="project" value="Ensembl"/>
</dbReference>
<dbReference type="GO" id="GO:0022008">
    <property type="term" value="P:neurogenesis"/>
    <property type="evidence" value="ECO:0007669"/>
    <property type="project" value="InterPro"/>
</dbReference>
<dbReference type="GO" id="GO:0021554">
    <property type="term" value="P:optic nerve development"/>
    <property type="evidence" value="ECO:0007669"/>
    <property type="project" value="Ensembl"/>
</dbReference>
<dbReference type="GO" id="GO:0003025">
    <property type="term" value="P:regulation of systemic arterial blood pressure by baroreceptor feedback"/>
    <property type="evidence" value="ECO:0007669"/>
    <property type="project" value="Ensembl"/>
</dbReference>
<dbReference type="GO" id="GO:0007608">
    <property type="term" value="P:sensory perception of smell"/>
    <property type="evidence" value="ECO:0007669"/>
    <property type="project" value="Ensembl"/>
</dbReference>
<dbReference type="GO" id="GO:0007605">
    <property type="term" value="P:sensory perception of sound"/>
    <property type="evidence" value="ECO:0007669"/>
    <property type="project" value="Ensembl"/>
</dbReference>
<dbReference type="GO" id="GO:0021564">
    <property type="term" value="P:vagus nerve development"/>
    <property type="evidence" value="ECO:0007669"/>
    <property type="project" value="Ensembl"/>
</dbReference>
<dbReference type="CDD" id="cd21285">
    <property type="entry name" value="CH_NAV2"/>
    <property type="match status" value="1"/>
</dbReference>
<dbReference type="FunFam" id="1.10.418.10:FF:000018">
    <property type="entry name" value="Neuron navigator 2"/>
    <property type="match status" value="1"/>
</dbReference>
<dbReference type="FunFam" id="3.40.50.300:FF:000451">
    <property type="entry name" value="Neuron navigator 2"/>
    <property type="match status" value="1"/>
</dbReference>
<dbReference type="Gene3D" id="1.10.418.10">
    <property type="entry name" value="Calponin-like domain"/>
    <property type="match status" value="1"/>
</dbReference>
<dbReference type="Gene3D" id="3.40.50.300">
    <property type="entry name" value="P-loop containing nucleotide triphosphate hydrolases"/>
    <property type="match status" value="1"/>
</dbReference>
<dbReference type="InterPro" id="IPR003593">
    <property type="entry name" value="AAA+_ATPase"/>
</dbReference>
<dbReference type="InterPro" id="IPR001715">
    <property type="entry name" value="CH_dom"/>
</dbReference>
<dbReference type="InterPro" id="IPR036872">
    <property type="entry name" value="CH_dom_sf"/>
</dbReference>
<dbReference type="InterPro" id="IPR039041">
    <property type="entry name" value="Nav/unc-53"/>
</dbReference>
<dbReference type="InterPro" id="IPR027417">
    <property type="entry name" value="P-loop_NTPase"/>
</dbReference>
<dbReference type="PANTHER" id="PTHR12784:SF6">
    <property type="entry name" value="NEURON NAVIGATOR 2"/>
    <property type="match status" value="1"/>
</dbReference>
<dbReference type="PANTHER" id="PTHR12784">
    <property type="entry name" value="STEERIN"/>
    <property type="match status" value="1"/>
</dbReference>
<dbReference type="Pfam" id="PF25408">
    <property type="entry name" value="AAA_lid_NAV1"/>
    <property type="match status" value="1"/>
</dbReference>
<dbReference type="Pfam" id="PF00307">
    <property type="entry name" value="CH"/>
    <property type="match status" value="1"/>
</dbReference>
<dbReference type="Pfam" id="PF23092">
    <property type="entry name" value="Ubiquitin_6"/>
    <property type="match status" value="1"/>
</dbReference>
<dbReference type="SMART" id="SM00382">
    <property type="entry name" value="AAA"/>
    <property type="match status" value="1"/>
</dbReference>
<dbReference type="SMART" id="SM00033">
    <property type="entry name" value="CH"/>
    <property type="match status" value="1"/>
</dbReference>
<dbReference type="SUPFAM" id="SSF47576">
    <property type="entry name" value="Calponin-homology domain, CH-domain"/>
    <property type="match status" value="1"/>
</dbReference>
<dbReference type="SUPFAM" id="SSF52540">
    <property type="entry name" value="P-loop containing nucleoside triphosphate hydrolases"/>
    <property type="match status" value="2"/>
</dbReference>
<dbReference type="PROSITE" id="PS50021">
    <property type="entry name" value="CH"/>
    <property type="match status" value="1"/>
</dbReference>
<comment type="function">
    <text evidence="8 10">Possesses 3' to 5' helicase activity and exonuclease activity. Involved in neuronal development, specifically in the development of different sensory organs.</text>
</comment>
<comment type="catalytic activity">
    <reaction>
        <text>ATP + H2O = ADP + phosphate + H(+)</text>
        <dbReference type="Rhea" id="RHEA:13065"/>
        <dbReference type="ChEBI" id="CHEBI:15377"/>
        <dbReference type="ChEBI" id="CHEBI:15378"/>
        <dbReference type="ChEBI" id="CHEBI:30616"/>
        <dbReference type="ChEBI" id="CHEBI:43474"/>
        <dbReference type="ChEBI" id="CHEBI:456216"/>
        <dbReference type="EC" id="3.6.4.12"/>
    </reaction>
</comment>
<comment type="interaction">
    <interactant intactId="EBI-741200">
        <id>Q8IVL1</id>
    </interactant>
    <interactant intactId="EBI-2809203">
        <id>Q7Z6V5</id>
        <label>ADAT2</label>
    </interactant>
    <organismsDiffer>false</organismsDiffer>
    <experiments>3</experiments>
</comment>
<comment type="interaction">
    <interactant intactId="EBI-741200">
        <id>Q8IVL1</id>
    </interactant>
    <interactant intactId="EBI-10245749">
        <id>Q5T655</id>
        <label>CFAP58</label>
    </interactant>
    <organismsDiffer>false</organismsDiffer>
    <experiments>3</experiments>
</comment>
<comment type="interaction">
    <interactant intactId="EBI-741200">
        <id>Q8IVL1</id>
    </interactant>
    <interactant intactId="EBI-2866661">
        <id>Q9UNL4</id>
        <label>ING4</label>
    </interactant>
    <organismsDiffer>false</organismsDiffer>
    <experiments>3</experiments>
</comment>
<comment type="interaction">
    <interactant intactId="EBI-741200">
        <id>Q8IVL1</id>
    </interactant>
    <interactant intactId="EBI-488533">
        <id>Q8WYH8</id>
        <label>ING5</label>
    </interactant>
    <organismsDiffer>false</organismsDiffer>
    <experiments>6</experiments>
</comment>
<comment type="interaction">
    <interactant intactId="EBI-741200">
        <id>Q8IVL1</id>
    </interactant>
    <interactant intactId="EBI-399246">
        <id>Q9UBU8</id>
        <label>MORF4L1</label>
    </interactant>
    <organismsDiffer>false</organismsDiffer>
    <experiments>3</experiments>
</comment>
<comment type="interaction">
    <interactant intactId="EBI-741200">
        <id>Q8IVL1</id>
    </interactant>
    <interactant intactId="EBI-348555">
        <id>O75928</id>
        <label>PIAS2</label>
    </interactant>
    <organismsDiffer>false</organismsDiffer>
    <experiments>4</experiments>
</comment>
<comment type="interaction">
    <interactant intactId="EBI-741200">
        <id>Q8IVL1</id>
    </interactant>
    <interactant intactId="EBI-2514922">
        <id>Q96T37</id>
        <label>RBM15</label>
    </interactant>
    <organismsDiffer>false</organismsDiffer>
    <experiments>3</experiments>
</comment>
<comment type="interaction">
    <interactant intactId="EBI-741200">
        <id>Q8IVL1</id>
    </interactant>
    <interactant intactId="EBI-726721">
        <id>Q8NDT2</id>
        <label>RBM15B</label>
    </interactant>
    <organismsDiffer>false</organismsDiffer>
    <experiments>3</experiments>
</comment>
<comment type="interaction">
    <interactant intactId="EBI-741200">
        <id>Q8IVL1</id>
    </interactant>
    <interactant intactId="EBI-10269922">
        <id>Q8NDT2-2</id>
        <label>RBM15B</label>
    </interactant>
    <organismsDiffer>false</organismsDiffer>
    <experiments>3</experiments>
</comment>
<comment type="subcellular location">
    <subcellularLocation>
        <location evidence="8">Nucleus</location>
    </subcellularLocation>
</comment>
<comment type="alternative products">
    <event type="alternative splicing"/>
    <isoform>
        <id>Q8IVL1-1</id>
        <name>1</name>
        <sequence type="displayed"/>
    </isoform>
    <isoform>
        <id>Q8IVL1-2</id>
        <name>2</name>
        <name>RAINB1d</name>
        <sequence type="described" ref="VSP_021934 VSP_021937"/>
    </isoform>
    <isoform>
        <id>Q8IVL1-3</id>
        <name>3</name>
        <name>HELAD1L</name>
        <sequence type="described" ref="VSP_021934 VSP_021937 VSP_021938"/>
    </isoform>
    <isoform>
        <id>Q8IVL1-4</id>
        <name>4</name>
        <name>HELAD1S</name>
        <sequence type="described" ref="VSP_021927 VSP_021934 VSP_021937 VSP_021938"/>
    </isoform>
    <isoform>
        <id>Q8IVL1-5</id>
        <name>5</name>
        <sequence type="described" ref="VSP_021926 VSP_021935 VSP_021936 VSP_021937 VSP_021938"/>
    </isoform>
    <isoform>
        <id>Q8IVL1-6</id>
        <name>6</name>
        <sequence type="described" ref="VSP_021925 VSP_021937 VSP_021938"/>
    </isoform>
    <isoform>
        <id>Q8IVL1-7</id>
        <name>7</name>
        <sequence type="described" ref="VSP_021924"/>
    </isoform>
    <isoform>
        <id>Q8IVL1-8</id>
        <name>8</name>
        <sequence type="described" ref="VSP_021932"/>
    </isoform>
    <isoform>
        <id>Q8IVL1-9</id>
        <name>9</name>
        <sequence type="described" ref="VSP_021933"/>
    </isoform>
    <isoform>
        <id>Q8IVL1-10</id>
        <name>10</name>
        <sequence type="described" ref="VSP_021928"/>
    </isoform>
    <isoform>
        <id>Q8IVL1-11</id>
        <name>11</name>
        <sequence type="described" ref="VSP_021929"/>
    </isoform>
    <isoform>
        <id>Q8IVL1-12</id>
        <name>12</name>
        <sequence type="described" ref="VSP_021930"/>
    </isoform>
    <isoform>
        <id>Q8IVL1-13</id>
        <name>13</name>
        <sequence type="described" ref="VSP_021931"/>
    </isoform>
    <text>Additional isoforms may exist.</text>
</comment>
<comment type="tissue specificity">
    <text evidence="5 6 7 8">Highly expressed in the brain, kidney and liver. Also expressed in the thyroid, mammary gland, spinal cord, heart, placenta and lung. Abundantly expressed in colon cancers.</text>
</comment>
<comment type="developmental stage">
    <text evidence="5">Highly expressed in the nervous system of developing embryos. Also expressed in fetal heart, liver and kidney.</text>
</comment>
<comment type="induction">
    <text evidence="5 8">By all-trans retinoic acid (ATRA). Up-regulated in colorectal carcinomas.</text>
</comment>
<comment type="similarity">
    <text evidence="18">Belongs to the Nav/unc-53 family.</text>
</comment>
<comment type="caution">
    <text evidence="18">PubMed:15158073 experiments have been carried out in mouse.</text>
</comment>
<comment type="sequence caution" evidence="18">
    <conflict type="erroneous initiation">
        <sequence resource="EMBL-CDS" id="BAA92657"/>
    </conflict>
    <text>Extended N-terminus.</text>
</comment>
<comment type="sequence caution" evidence="18">
    <conflict type="frameshift">
        <sequence resource="EMBL-CDS" id="BAB85038"/>
    </conflict>
</comment>
<gene>
    <name type="primary">NAV2</name>
    <name type="synonym">HELAD1</name>
    <name type="synonym">KIAA1419</name>
    <name type="synonym">POMFIL2</name>
    <name type="synonym">RAINB1</name>
    <name type="synonym">STEERIN2</name>
</gene>
<accession>Q8IVL1</accession>
<accession>A6NEC1</accession>
<accession>Q8IVK3</accession>
<accession>Q8IVK4</accession>
<accession>Q8IVK5</accession>
<accession>Q8IVK6</accession>
<accession>Q8IVK7</accession>
<accession>Q8IVK8</accession>
<accession>Q8NHC9</accession>
<accession>Q8NHD0</accession>
<accession>Q8TDE9</accession>
<accession>Q8TDF0</accession>
<accession>Q8TEB3</accession>
<accession>Q96B30</accession>
<accession>Q9NUZ6</accession>
<accession>Q9NVM7</accession>
<accession>Q9P2C8</accession>
<keyword id="KW-0002">3D-structure</keyword>
<keyword id="KW-0025">Alternative splicing</keyword>
<keyword id="KW-0067">ATP-binding</keyword>
<keyword id="KW-0175">Coiled coil</keyword>
<keyword id="KW-0347">Helicase</keyword>
<keyword id="KW-0378">Hydrolase</keyword>
<keyword id="KW-0547">Nucleotide-binding</keyword>
<keyword id="KW-0539">Nucleus</keyword>
<keyword id="KW-0597">Phosphoprotein</keyword>
<keyword id="KW-1267">Proteomics identification</keyword>
<keyword id="KW-1185">Reference proteome</keyword>
<organism>
    <name type="scientific">Homo sapiens</name>
    <name type="common">Human</name>
    <dbReference type="NCBI Taxonomy" id="9606"/>
    <lineage>
        <taxon>Eukaryota</taxon>
        <taxon>Metazoa</taxon>
        <taxon>Chordata</taxon>
        <taxon>Craniata</taxon>
        <taxon>Vertebrata</taxon>
        <taxon>Euteleostomi</taxon>
        <taxon>Mammalia</taxon>
        <taxon>Eutheria</taxon>
        <taxon>Euarchontoglires</taxon>
        <taxon>Primates</taxon>
        <taxon>Haplorrhini</taxon>
        <taxon>Catarrhini</taxon>
        <taxon>Hominidae</taxon>
        <taxon>Homo</taxon>
    </lineage>
</organism>
<sequence length="2488" mass="268167">MPAILVASKMKSGLPKPVHSAAPILHVPPARAGPQPCYLKLGSKVEVSKTTYPSQIPLKSQVLQGLQEPAGEGLPLRKSGSVENGFDTQIYTDWANHYLAKSGHKRLIRDLQQDVTDGVLLAQIIQVVANEKIEDINGCPKNRSQMIENIDACLNFLAAKGINIQGLSAEEIRNGNLKAILGLFFSLSRYKQQQQQPQKQHLSSPLPPAVSQVAGAPSQCQAGTPQQQVPVTPQAPCQPHQPAPHQQSKAQAEMQSSASSKDSSQSKIIRFTLGQKKISRLPGPTARVSAAGSEAKTRGGSTTANNRRSQSFNNYDKSKPVTSPPPPPSSHEKEPLASSASSHPGMSDNAPASLESGSSSTPTNCSTSSAIPQPGAATKPWRSKSLSVKHSATVSMLSVKPPGPEAPRPTPEAMKPAPNNQKSMLEKLKLFNSKGGSKAGEGPGSRDTSCERLETLPSFEESEELEAASRMLTTVGPASSSPKIALKGIAQRTFSRALTNKKSSLKGNEKEKEKQQREKDKEKSKDLAKRASVTERLDLKEEPKEDPSGAAVPEMPKKSSKIASFIPKGGKLNSAKKEPMAPSHSGIPKPGMKSMPGKSPSAPAPSKEGERSRSGKLSSGLPQQKPQLDGRHSSSSSSLASSEGKGPGGTTLNHSISSQTVSGSVGTTQTTGSNTVSVQLPQPQQQYNHPNTATVAPFLYRSQTDTEGNVTAESSSTGVSVEPSHFTKTGQPALEELTGEDPEARRLRTVKNIADLRQNLEETMSSLRGTQVTHSTLETTFDTNVTTEMSGRSILSLTGRPTPLSWRLGQSSPRLQAGDAPSMGNGYPPRANASRFINTESGRYVYSAPLRRQLASRGSSVCHVDVSDKAGDEMDLEGISMDAPGYMSDGDVLSKNIRTDDITSGYMTDGGLGLYTRRLNRLPDGMAVVRETLQRNTSLGLGDADSWDDSSSVSSGISDTIDNLSTDDINTSSSISSYANTPASSRKNLDVQTDAEKHSQVERNSLWSGDDVKKSDGGSDSGIKMEPGSKWRRNPSDVSDESDKSTSGKKNPVISQTGSWRRGMTAQVGITMPRTKPSAPAGALKTPGTGKTDDAKVSEKGRLSPKASQVKRSPSDAGRSSGDESKKPLPSSSRTPTANANSFGFKKQSGSAAGLAMITASGVTVTSRSATLGKIPKSSALVSRSAGRKSSMDGAQNQDDGYLALSSRTNLQYRSLPRPSKSNSRNGAGNRSSTSSIDSNISSKSAGLPVPKLREPSKTALGSSLPGLVNQTDKEKGISSDNESVASCNSVKVNPAAQPVSSPAQTSLQPGAKYPDVASPTLRRLFGGKPTKQVPIATAENMKNSVVISNPHATMTQQGNLDSPSGSGVLSSGSSSPLYSKNVDLNQSPLASSPSSAHSAPSNSLTWGTNASSSSAVSKDGLGFQSVSSLHTSCESIDISLSSGGVPSHNSSTGLIASSKDDSLTPFVRTNSVKTTLSESPLSSPAASPKFCRSTLPRKQDSDPHLDRNTLPKKGLRYTPTSQLRTQEDAKEWLRSHSAGGLQDTAANSPFSSGSSVTSPSGTRFNFSQLASPTTVTQMSLSNPTMLRTHSLSNADGQYDPYTDSRFRNSSMSLDEKSRTMSRSGSFRDGFEEESWEKSSVDNFVSRLHSSLHFSLPLFHHARYELVHGSSLSLVSSTSSVYSTPEEKCQSEIRKLRRELDASQEKVSALTTQLTANAHLVAAFEQSLGNMTIRLQSLTMTAEQKDSELNELRKTIELLKKQNAAAQAAINGVINTPELNCKGNGTAQSADLRIRRQHSSDSVSSINSATSHSSVGSNIESDSKKKKRKNWVNELRSSFKQAFGKKKSPKSASSHSDIEEMTDSSLPSSPKLPHNGSTGSTPLLRNSHSNSLISECMDSEAETVMQLRNELRDKEMKLTDIRLEALSSAHQLDQLREAMNRMQSEIEKLKAENDRLKSESQGSGCSRAPSQVSISASPRQSMGLSQHSLNLTESTSLDMLLDDTGECSARKEGGRHVKIVVSFQEEMKWKEDSRPHLFLIGCIGVSGKTKWDVLDGVVRRLFKEYIIHVDPVSQLGLNSDSVLGYSIGEIKRSNTSETPELLPCGYLVGENTTISVTVKGLAENSLDSLVFESLIPKPILQRYVSLLIEHRRIILSGPSGTGKTYLANRLSEYIVLREGRELTDGVIATFNVDHKSSKELRQYLSNLADQCNSENNAVDMPLVIILDNLHHVSSLGEIFNGLLNCKYHKCPYIIGTMNQATSSTPNLQLHHNFRWVLCANHTEPVKGFLGRFLRRKLMETEISGRVRNMELVKIIDWIPKVWHHLNRFLEAHSSSDVTIGPRLFLSCPIDVDGSRVWFTDLWNYSIIPYLLEAVREGLQLYGRRAPWEDPAKWVMDTYPWAASPQQHEWPPLLQLRPEDVGFDGYSMPREGSTSKQMPPSDAEGDPLMNMLMRLQEAANYSSPQSYDSDSNSNSHHDDILDSSLESTL</sequence>
<evidence type="ECO:0000255" key="1"/>
<evidence type="ECO:0000255" key="2">
    <source>
        <dbReference type="PROSITE-ProRule" id="PRU00044"/>
    </source>
</evidence>
<evidence type="ECO:0000256" key="3">
    <source>
        <dbReference type="SAM" id="MobiDB-lite"/>
    </source>
</evidence>
<evidence type="ECO:0000269" key="4">
    <source>
    </source>
</evidence>
<evidence type="ECO:0000269" key="5">
    <source>
    </source>
</evidence>
<evidence type="ECO:0000269" key="6">
    <source>
    </source>
</evidence>
<evidence type="ECO:0000269" key="7">
    <source>
    </source>
</evidence>
<evidence type="ECO:0000269" key="8">
    <source>
    </source>
</evidence>
<evidence type="ECO:0000269" key="9">
    <source>
    </source>
</evidence>
<evidence type="ECO:0000269" key="10">
    <source>
    </source>
</evidence>
<evidence type="ECO:0000269" key="11">
    <source>
    </source>
</evidence>
<evidence type="ECO:0000303" key="12">
    <source>
    </source>
</evidence>
<evidence type="ECO:0000303" key="13">
    <source>
    </source>
</evidence>
<evidence type="ECO:0000303" key="14">
    <source>
    </source>
</evidence>
<evidence type="ECO:0000303" key="15">
    <source>
    </source>
</evidence>
<evidence type="ECO:0000303" key="16">
    <source>
    </source>
</evidence>
<evidence type="ECO:0000303" key="17">
    <source>
    </source>
</evidence>
<evidence type="ECO:0000305" key="18"/>
<evidence type="ECO:0007744" key="19">
    <source>
    </source>
</evidence>
<evidence type="ECO:0007744" key="20">
    <source>
    </source>
</evidence>
<evidence type="ECO:0007829" key="21">
    <source>
        <dbReference type="PDB" id="2YRN"/>
    </source>
</evidence>
<feature type="chain" id="PRO_0000267198" description="Neuron navigator 2">
    <location>
        <begin position="1"/>
        <end position="2488"/>
    </location>
</feature>
<feature type="domain" description="Calponin-homology (CH)" evidence="2">
    <location>
        <begin position="85"/>
        <end position="192"/>
    </location>
</feature>
<feature type="region of interest" description="Disordered" evidence="3">
    <location>
        <begin position="194"/>
        <end position="675"/>
    </location>
</feature>
<feature type="region of interest" description="Disordered" evidence="3">
    <location>
        <begin position="706"/>
        <end position="727"/>
    </location>
</feature>
<feature type="region of interest" description="Disordered" evidence="3">
    <location>
        <begin position="804"/>
        <end position="824"/>
    </location>
</feature>
<feature type="region of interest" description="Disordered" evidence="3">
    <location>
        <begin position="939"/>
        <end position="1151"/>
    </location>
</feature>
<feature type="region of interest" description="Disordered" evidence="3">
    <location>
        <begin position="1177"/>
        <end position="1200"/>
    </location>
</feature>
<feature type="region of interest" description="Disordered" evidence="3">
    <location>
        <begin position="1213"/>
        <end position="1283"/>
    </location>
</feature>
<feature type="region of interest" description="Disordered" evidence="3">
    <location>
        <begin position="1295"/>
        <end position="1338"/>
    </location>
</feature>
<feature type="region of interest" description="Disordered" evidence="3">
    <location>
        <begin position="1355"/>
        <end position="1412"/>
    </location>
</feature>
<feature type="region of interest" description="Disordered" evidence="3">
    <location>
        <begin position="1440"/>
        <end position="1460"/>
    </location>
</feature>
<feature type="region of interest" description="Disordered" evidence="3">
    <location>
        <begin position="1473"/>
        <end position="1560"/>
    </location>
</feature>
<feature type="region of interest" description="Disordered" evidence="3">
    <location>
        <begin position="1591"/>
        <end position="1629"/>
    </location>
</feature>
<feature type="region of interest" description="Disordered" evidence="3">
    <location>
        <begin position="1790"/>
        <end position="1887"/>
    </location>
</feature>
<feature type="region of interest" description="Disordered" evidence="3">
    <location>
        <begin position="1951"/>
        <end position="1985"/>
    </location>
</feature>
<feature type="region of interest" description="Disordered" evidence="3">
    <location>
        <begin position="2423"/>
        <end position="2488"/>
    </location>
</feature>
<feature type="coiled-coil region" evidence="1">
    <location>
        <begin position="498"/>
        <end position="531"/>
    </location>
</feature>
<feature type="coiled-coil region" evidence="1">
    <location>
        <begin position="743"/>
        <end position="771"/>
    </location>
</feature>
<feature type="coiled-coil region" evidence="1">
    <location>
        <begin position="1686"/>
        <end position="1773"/>
    </location>
</feature>
<feature type="coiled-coil region" evidence="1">
    <location>
        <begin position="1897"/>
        <end position="1964"/>
    </location>
</feature>
<feature type="compositionally biased region" description="Low complexity" evidence="3">
    <location>
        <begin position="194"/>
        <end position="204"/>
    </location>
</feature>
<feature type="compositionally biased region" description="Low complexity" evidence="3">
    <location>
        <begin position="221"/>
        <end position="247"/>
    </location>
</feature>
<feature type="compositionally biased region" description="Low complexity" evidence="3">
    <location>
        <begin position="255"/>
        <end position="267"/>
    </location>
</feature>
<feature type="compositionally biased region" description="Polar residues" evidence="3">
    <location>
        <begin position="299"/>
        <end position="315"/>
    </location>
</feature>
<feature type="compositionally biased region" description="Low complexity" evidence="3">
    <location>
        <begin position="356"/>
        <end position="369"/>
    </location>
</feature>
<feature type="compositionally biased region" description="Polar residues" evidence="3">
    <location>
        <begin position="384"/>
        <end position="396"/>
    </location>
</feature>
<feature type="compositionally biased region" description="Pro residues" evidence="3">
    <location>
        <begin position="401"/>
        <end position="410"/>
    </location>
</feature>
<feature type="compositionally biased region" description="Polar residues" evidence="3">
    <location>
        <begin position="492"/>
        <end position="506"/>
    </location>
</feature>
<feature type="compositionally biased region" description="Basic and acidic residues" evidence="3">
    <location>
        <begin position="507"/>
        <end position="547"/>
    </location>
</feature>
<feature type="compositionally biased region" description="Low complexity" evidence="3">
    <location>
        <begin position="592"/>
        <end position="606"/>
    </location>
</feature>
<feature type="compositionally biased region" description="Polar residues" evidence="3">
    <location>
        <begin position="615"/>
        <end position="626"/>
    </location>
</feature>
<feature type="compositionally biased region" description="Low complexity" evidence="3">
    <location>
        <begin position="633"/>
        <end position="642"/>
    </location>
</feature>
<feature type="compositionally biased region" description="Low complexity" evidence="3">
    <location>
        <begin position="657"/>
        <end position="675"/>
    </location>
</feature>
<feature type="compositionally biased region" description="Polar residues" evidence="3">
    <location>
        <begin position="706"/>
        <end position="719"/>
    </location>
</feature>
<feature type="compositionally biased region" description="Low complexity" evidence="3">
    <location>
        <begin position="939"/>
        <end position="985"/>
    </location>
</feature>
<feature type="compositionally biased region" description="Basic and acidic residues" evidence="3">
    <location>
        <begin position="1091"/>
        <end position="1102"/>
    </location>
</feature>
<feature type="compositionally biased region" description="Polar residues" evidence="3">
    <location>
        <begin position="1130"/>
        <end position="1142"/>
    </location>
</feature>
<feature type="compositionally biased region" description="Low complexity" evidence="3">
    <location>
        <begin position="1220"/>
        <end position="1245"/>
    </location>
</feature>
<feature type="compositionally biased region" description="Polar residues" evidence="3">
    <location>
        <begin position="1299"/>
        <end position="1309"/>
    </location>
</feature>
<feature type="compositionally biased region" description="Low complexity" evidence="3">
    <location>
        <begin position="1363"/>
        <end position="1380"/>
    </location>
</feature>
<feature type="compositionally biased region" description="Low complexity" evidence="3">
    <location>
        <begin position="1388"/>
        <end position="1404"/>
    </location>
</feature>
<feature type="compositionally biased region" description="Polar residues" evidence="3">
    <location>
        <begin position="1440"/>
        <end position="1456"/>
    </location>
</feature>
<feature type="compositionally biased region" description="Low complexity" evidence="3">
    <location>
        <begin position="1477"/>
        <end position="1489"/>
    </location>
</feature>
<feature type="compositionally biased region" description="Basic and acidic residues" evidence="3">
    <location>
        <begin position="1498"/>
        <end position="1510"/>
    </location>
</feature>
<feature type="compositionally biased region" description="Basic and acidic residues" evidence="3">
    <location>
        <begin position="1526"/>
        <end position="1535"/>
    </location>
</feature>
<feature type="compositionally biased region" description="Low complexity" evidence="3">
    <location>
        <begin position="1549"/>
        <end position="1560"/>
    </location>
</feature>
<feature type="compositionally biased region" description="Polar residues" evidence="3">
    <location>
        <begin position="1800"/>
        <end position="1820"/>
    </location>
</feature>
<feature type="compositionally biased region" description="Polar residues" evidence="3">
    <location>
        <begin position="1875"/>
        <end position="1887"/>
    </location>
</feature>
<feature type="compositionally biased region" description="Polar residues" evidence="3">
    <location>
        <begin position="1959"/>
        <end position="1985"/>
    </location>
</feature>
<feature type="compositionally biased region" description="Low complexity" evidence="3">
    <location>
        <begin position="2460"/>
        <end position="2473"/>
    </location>
</feature>
<feature type="binding site" evidence="1">
    <location>
        <begin position="2157"/>
        <end position="2164"/>
    </location>
    <ligand>
        <name>ATP</name>
        <dbReference type="ChEBI" id="CHEBI:30616"/>
    </ligand>
</feature>
<feature type="modified residue" description="Phosphoserine" evidence="20">
    <location>
        <position position="1480"/>
    </location>
</feature>
<feature type="modified residue" description="Phosphoserine" evidence="20">
    <location>
        <position position="1484"/>
    </location>
</feature>
<feature type="modified residue" description="Phosphoserine" evidence="20">
    <location>
        <position position="1488"/>
    </location>
</feature>
<feature type="modified residue" description="Phosphoserine" evidence="19 20">
    <location>
        <position position="1977"/>
    </location>
</feature>
<feature type="splice variant" id="VSP_021924" description="In isoform 7." evidence="15">
    <location>
        <begin position="1"/>
        <end position="1896"/>
    </location>
</feature>
<feature type="splice variant" id="VSP_021925" description="In isoform 6." evidence="15 17">
    <location>
        <begin position="1"/>
        <end position="1578"/>
    </location>
</feature>
<feature type="splice variant" id="VSP_021926" description="In isoform 5." evidence="15">
    <location>
        <begin position="1"/>
        <end position="937"/>
    </location>
</feature>
<feature type="splice variant" id="VSP_021927" description="In isoform 4." evidence="14">
    <original>MPAILVASKMKSGLPKPVHSAAPILHVPPARAGPQPCYLKLGSKVEVSKTTYPSQIPLKSQVLQGLQEPAGEGLPLRKSGSVENGFDTQ</original>
    <variation>MESVSESSQQQKRKPVIHGLEDQKR</variation>
    <location>
        <begin position="1"/>
        <end position="89"/>
    </location>
</feature>
<feature type="splice variant" id="VSP_021928" description="In isoform 10." evidence="16">
    <original>MPAILVASKMKSGLPKPVHSAAPILHVPPARAGPQPCYLKLGSKVEVSKTTYPSQIPLKSQVLQGLQEPAGEGLPLRKSGSVENGFDT</original>
    <variation>MSVMLWRWEQNNTTMKL</variation>
    <location>
        <begin position="1"/>
        <end position="88"/>
    </location>
</feature>
<feature type="splice variant" id="VSP_021929" description="In isoform 11." evidence="16">
    <original>MPAILVASKMKSGLPKPVHSAAPILHVPPARAGPQPCYLKLGSKVEVSKTTYPSQIPLKSQVLQGLQEPAGEGLPLRKSGSVENGFDT</original>
    <variation>MESVSESSQQQKRKPVIHGLEDQKR</variation>
    <location>
        <begin position="1"/>
        <end position="88"/>
    </location>
</feature>
<feature type="splice variant" id="VSP_021930" description="In isoform 12." evidence="16">
    <original>MPAILVASKMKSGLPKPVHSAAPILHVPPARAGPQPCYLKLGSKVEVSKTTYPSQIPLKSQVLQGLQEPAGEGLPLRKSGSVENGFDT</original>
    <variation>MQECDSKFFLPSGSNSGFTLLSNQ</variation>
    <location>
        <begin position="1"/>
        <end position="88"/>
    </location>
</feature>
<feature type="splice variant" id="VSP_021931" description="In isoform 13." evidence="16">
    <original>MPAILVASKMKSGLPKPVHSAAPILHVPPARAGPQPCYLKLGSKVEVSKTTYPSQIPLKSQVLQGLQEPAGEGLPLRKSGSVENGFDT</original>
    <variation>MAIDLYCGLACLWGIHEPR</variation>
    <location>
        <begin position="1"/>
        <end position="88"/>
    </location>
</feature>
<feature type="splice variant" id="VSP_021932" description="In isoform 8." evidence="16">
    <original>MPAILVASKMKSGLPKPVHSAAPILHVPPARAGPQPCYLKLGSKVEVSKTTYPSQIPLKSQVLQGLQEPAGEGLPLRKSGSVENGFDT</original>
    <variation>MLWPRNLT</variation>
    <location>
        <begin position="1"/>
        <end position="88"/>
    </location>
</feature>
<feature type="splice variant" id="VSP_021933" description="In isoform 9." evidence="16">
    <original>MPAILVASKMKSGLPKPVHSAAPILHVPPARAGPQPCYLKLGSKVEVSKTTYPSQIPLKSQVLQGLQEPAGEGLPLRKSGSVENGFDT</original>
    <variation>MAGTSAASSWGGGK</variation>
    <location>
        <begin position="1"/>
        <end position="88"/>
    </location>
</feature>
<feature type="splice variant" id="VSP_021934" description="In isoform 2, isoform 3 and isoform 4." evidence="12 13 14">
    <location>
        <begin position="256"/>
        <end position="278"/>
    </location>
</feature>
<feature type="splice variant" id="VSP_021935" description="In isoform 5." evidence="15">
    <original>SLGLGDAD</original>
    <variation>MLWPRNLT</variation>
    <location>
        <begin position="938"/>
        <end position="945"/>
    </location>
</feature>
<feature type="splice variant" id="VSP_021936" description="In isoform 5." evidence="15">
    <location>
        <begin position="1480"/>
        <end position="1501"/>
    </location>
</feature>
<feature type="splice variant" id="VSP_021937" description="In isoform 2, isoform 3, isoform 4, isoform 5 and isoform 6." evidence="12 13 14 15 17">
    <location>
        <begin position="1634"/>
        <end position="1666"/>
    </location>
</feature>
<feature type="splice variant" id="VSP_021938" description="In isoform 3, isoform 4, isoform 5 and isoform 6." evidence="13 14 15 17">
    <location>
        <begin position="1832"/>
        <end position="1834"/>
    </location>
</feature>
<feature type="sequence variant" id="VAR_029640" description="In dbSNP:rs6483617." evidence="8 10">
    <original>R</original>
    <variation>K</variation>
    <location>
        <position position="109"/>
    </location>
</feature>
<feature type="sequence variant" id="VAR_029641" description="In dbSNP:rs16937251.">
    <original>Q</original>
    <variation>H</variation>
    <location>
        <position position="491"/>
    </location>
</feature>
<feature type="sequence variant" id="VAR_029642" description="In dbSNP:rs3802799." evidence="9">
    <original>E</original>
    <variation>D</variation>
    <location>
        <position position="1041"/>
    </location>
</feature>
<feature type="sequence variant" id="VAR_029643" description="In dbSNP:rs3802800." evidence="4 5 8 9 10 11">
    <original>P</original>
    <variation>A</variation>
    <location>
        <position position="1077"/>
    </location>
</feature>
<feature type="sequence variant" id="VAR_032252" description="In dbSNP:rs35891966." evidence="9">
    <original>V</original>
    <variation>I</variation>
    <location>
        <position position="2374"/>
    </location>
</feature>
<feature type="sequence conflict" description="In Ref. 2; BAC00854 and 3; CAD32471." evidence="18" ref="2 3">
    <original>A</original>
    <variation>T</variation>
    <location>
        <position position="100"/>
    </location>
</feature>
<feature type="sequence conflict" description="In Ref. 1; AAL96479/AAL96480 and 4; BAA92657." evidence="18" ref="1 4">
    <original>S</original>
    <variation>P</variation>
    <location>
        <position position="259"/>
    </location>
</feature>
<feature type="sequence conflict" description="In Ref. 3; CAD32471." evidence="18" ref="3">
    <original>P</original>
    <variation>S</variation>
    <location>
        <position position="282"/>
    </location>
</feature>
<feature type="sequence conflict" description="In Ref. 7; BAB85038." evidence="18" ref="7">
    <original>T</original>
    <variation>M</variation>
    <location>
        <position position="1046"/>
    </location>
</feature>
<feature type="sequence conflict" description="In Ref. 7; BAB85038." evidence="18" ref="7">
    <original>G</original>
    <variation>D</variation>
    <location>
        <position position="1173"/>
    </location>
</feature>
<feature type="sequence conflict" description="In Ref. 8; AAH16054." evidence="18" ref="8">
    <location>
        <position position="1845"/>
    </location>
</feature>
<feature type="sequence conflict" description="In Ref. 7; BAB85038." evidence="18" ref="7">
    <original>M</original>
    <variation>V</variation>
    <location>
        <position position="1939"/>
    </location>
</feature>
<feature type="sequence conflict" description="In Ref. 7; BAA91965." evidence="18" ref="7">
    <original>E</original>
    <variation>G</variation>
    <location>
        <position position="2012"/>
    </location>
</feature>
<feature type="sequence conflict" description="In Ref. 7; BAA91723." evidence="18" ref="7">
    <original>V</original>
    <variation>A</variation>
    <location>
        <position position="2053"/>
    </location>
</feature>
<feature type="sequence conflict" description="In Ref. 7; BAB85038." evidence="18" ref="7">
    <original>L</original>
    <variation>V</variation>
    <location>
        <position position="2075"/>
    </location>
</feature>
<feature type="sequence conflict" description="In Ref. 7; BAA91965." evidence="18" ref="7">
    <original>K</original>
    <variation>E</variation>
    <location>
        <position position="2296"/>
    </location>
</feature>
<feature type="sequence conflict" description="In Ref. 7; BAB85038." evidence="18" ref="7">
    <original>E</original>
    <variation>K</variation>
    <location>
        <position position="2299"/>
    </location>
</feature>
<feature type="sequence conflict" description="In Ref. 7; BAA91723." evidence="18" ref="7">
    <original>M</original>
    <variation>V</variation>
    <location>
        <position position="2395"/>
    </location>
</feature>
<feature type="helix" evidence="21">
    <location>
        <begin position="86"/>
        <end position="101"/>
    </location>
</feature>
<feature type="helix" evidence="21">
    <location>
        <begin position="111"/>
        <end position="114"/>
    </location>
</feature>
<feature type="strand" evidence="21">
    <location>
        <begin position="115"/>
        <end position="118"/>
    </location>
</feature>
<feature type="helix" evidence="21">
    <location>
        <begin position="119"/>
        <end position="128"/>
    </location>
</feature>
<feature type="helix" evidence="21">
    <location>
        <begin position="145"/>
        <end position="159"/>
    </location>
</feature>
<feature type="helix" evidence="21">
    <location>
        <begin position="169"/>
        <end position="174"/>
    </location>
</feature>
<feature type="helix" evidence="21">
    <location>
        <begin position="177"/>
        <end position="191"/>
    </location>
</feature>
<protein>
    <recommendedName>
        <fullName>Neuron navigator 2</fullName>
        <ecNumber>3.6.4.12</ecNumber>
    </recommendedName>
    <alternativeName>
        <fullName>Helicase APC down-regulated 1</fullName>
    </alternativeName>
    <alternativeName>
        <fullName>Pore membrane and/or filament-interacting-like protein 2</fullName>
    </alternativeName>
    <alternativeName>
        <fullName>Retinoic acid inducible in neuroblastoma 1</fullName>
    </alternativeName>
    <alternativeName>
        <fullName>Steerin-2</fullName>
    </alternativeName>
    <alternativeName>
        <fullName>Unc-53 homolog 2</fullName>
        <shortName>unc53H2</shortName>
    </alternativeName>
</protein>
<name>NAV2_HUMAN</name>